<organism>
    <name type="scientific">Pseudomonas savastanoi pv. phaseolicola (strain 1448A / Race 6)</name>
    <name type="common">Pseudomonas syringae pv. phaseolicola (strain 1448A / Race 6)</name>
    <dbReference type="NCBI Taxonomy" id="264730"/>
    <lineage>
        <taxon>Bacteria</taxon>
        <taxon>Pseudomonadati</taxon>
        <taxon>Pseudomonadota</taxon>
        <taxon>Gammaproteobacteria</taxon>
        <taxon>Pseudomonadales</taxon>
        <taxon>Pseudomonadaceae</taxon>
        <taxon>Pseudomonas</taxon>
    </lineage>
</organism>
<keyword id="KW-0963">Cytoplasm</keyword>
<keyword id="KW-0489">Methyltransferase</keyword>
<keyword id="KW-0949">S-adenosyl-L-methionine</keyword>
<keyword id="KW-0808">Transferase</keyword>
<dbReference type="EC" id="2.1.1.77" evidence="1"/>
<dbReference type="EMBL" id="CP000058">
    <property type="protein sequence ID" value="AAZ34857.1"/>
    <property type="status" value="ALT_INIT"/>
    <property type="molecule type" value="Genomic_DNA"/>
</dbReference>
<dbReference type="SMR" id="Q48F88"/>
<dbReference type="KEGG" id="psp:PSPPH_3811"/>
<dbReference type="eggNOG" id="COG2518">
    <property type="taxonomic scope" value="Bacteria"/>
</dbReference>
<dbReference type="HOGENOM" id="CLU_055432_2_0_6"/>
<dbReference type="Proteomes" id="UP000000551">
    <property type="component" value="Chromosome"/>
</dbReference>
<dbReference type="GO" id="GO:0005737">
    <property type="term" value="C:cytoplasm"/>
    <property type="evidence" value="ECO:0007669"/>
    <property type="project" value="UniProtKB-SubCell"/>
</dbReference>
<dbReference type="GO" id="GO:0004719">
    <property type="term" value="F:protein-L-isoaspartate (D-aspartate) O-methyltransferase activity"/>
    <property type="evidence" value="ECO:0007669"/>
    <property type="project" value="UniProtKB-UniRule"/>
</dbReference>
<dbReference type="GO" id="GO:0032259">
    <property type="term" value="P:methylation"/>
    <property type="evidence" value="ECO:0007669"/>
    <property type="project" value="UniProtKB-KW"/>
</dbReference>
<dbReference type="GO" id="GO:0036211">
    <property type="term" value="P:protein modification process"/>
    <property type="evidence" value="ECO:0007669"/>
    <property type="project" value="UniProtKB-UniRule"/>
</dbReference>
<dbReference type="GO" id="GO:0030091">
    <property type="term" value="P:protein repair"/>
    <property type="evidence" value="ECO:0007669"/>
    <property type="project" value="UniProtKB-UniRule"/>
</dbReference>
<dbReference type="CDD" id="cd02440">
    <property type="entry name" value="AdoMet_MTases"/>
    <property type="match status" value="1"/>
</dbReference>
<dbReference type="FunFam" id="3.40.50.150:FF:000010">
    <property type="entry name" value="Protein-L-isoaspartate O-methyltransferase"/>
    <property type="match status" value="1"/>
</dbReference>
<dbReference type="Gene3D" id="3.40.50.150">
    <property type="entry name" value="Vaccinia Virus protein VP39"/>
    <property type="match status" value="1"/>
</dbReference>
<dbReference type="HAMAP" id="MF_00090">
    <property type="entry name" value="PIMT"/>
    <property type="match status" value="1"/>
</dbReference>
<dbReference type="InterPro" id="IPR000682">
    <property type="entry name" value="PCMT"/>
</dbReference>
<dbReference type="InterPro" id="IPR029063">
    <property type="entry name" value="SAM-dependent_MTases_sf"/>
</dbReference>
<dbReference type="NCBIfam" id="TIGR00080">
    <property type="entry name" value="pimt"/>
    <property type="match status" value="1"/>
</dbReference>
<dbReference type="NCBIfam" id="NF001453">
    <property type="entry name" value="PRK00312.1"/>
    <property type="match status" value="1"/>
</dbReference>
<dbReference type="PANTHER" id="PTHR11579">
    <property type="entry name" value="PROTEIN-L-ISOASPARTATE O-METHYLTRANSFERASE"/>
    <property type="match status" value="1"/>
</dbReference>
<dbReference type="PANTHER" id="PTHR11579:SF0">
    <property type="entry name" value="PROTEIN-L-ISOASPARTATE(D-ASPARTATE) O-METHYLTRANSFERASE"/>
    <property type="match status" value="1"/>
</dbReference>
<dbReference type="Pfam" id="PF01135">
    <property type="entry name" value="PCMT"/>
    <property type="match status" value="1"/>
</dbReference>
<dbReference type="SUPFAM" id="SSF53335">
    <property type="entry name" value="S-adenosyl-L-methionine-dependent methyltransferases"/>
    <property type="match status" value="1"/>
</dbReference>
<dbReference type="PROSITE" id="PS01279">
    <property type="entry name" value="PCMT"/>
    <property type="match status" value="1"/>
</dbReference>
<name>PIMT_PSE14</name>
<reference key="1">
    <citation type="journal article" date="2005" name="J. Bacteriol.">
        <title>Whole-genome sequence analysis of Pseudomonas syringae pv. phaseolicola 1448A reveals divergence among pathovars in genes involved in virulence and transposition.</title>
        <authorList>
            <person name="Joardar V."/>
            <person name="Lindeberg M."/>
            <person name="Jackson R.W."/>
            <person name="Selengut J."/>
            <person name="Dodson R."/>
            <person name="Brinkac L.M."/>
            <person name="Daugherty S.C."/>
            <person name="DeBoy R.T."/>
            <person name="Durkin A.S."/>
            <person name="Gwinn Giglio M."/>
            <person name="Madupu R."/>
            <person name="Nelson W.C."/>
            <person name="Rosovitz M.J."/>
            <person name="Sullivan S.A."/>
            <person name="Crabtree J."/>
            <person name="Creasy T."/>
            <person name="Davidsen T.M."/>
            <person name="Haft D.H."/>
            <person name="Zafar N."/>
            <person name="Zhou L."/>
            <person name="Halpin R."/>
            <person name="Holley T."/>
            <person name="Khouri H.M."/>
            <person name="Feldblyum T.V."/>
            <person name="White O."/>
            <person name="Fraser C.M."/>
            <person name="Chatterjee A.K."/>
            <person name="Cartinhour S."/>
            <person name="Schneider D."/>
            <person name="Mansfield J.W."/>
            <person name="Collmer A."/>
            <person name="Buell R."/>
        </authorList>
    </citation>
    <scope>NUCLEOTIDE SEQUENCE [LARGE SCALE GENOMIC DNA]</scope>
    <source>
        <strain>1448A / Race 6</strain>
    </source>
</reference>
<sequence>MTSQRTRERLIQRLCEEGISNQRVLDVIRKTPRHLFVDEALAHRAYEDTALPIGHNQTISQPYMVARMSELLLAAGPLDKVMEIGTGSGYQTAVLAQLVERVFSVERIKVLQDRAKERLVELNLRNVVFRWGDGWEGWPALAPYNGIIVTAVATDVPQALLDQLAPGGRLVIPVGSGEVQQLMLIIREENGFSRHVLGAVRFVPLLNGPIA</sequence>
<accession>Q48F88</accession>
<feature type="chain" id="PRO_0000351914" description="Protein-L-isoaspartate O-methyltransferase">
    <location>
        <begin position="1"/>
        <end position="211"/>
    </location>
</feature>
<feature type="active site" evidence="1">
    <location>
        <position position="60"/>
    </location>
</feature>
<protein>
    <recommendedName>
        <fullName evidence="1">Protein-L-isoaspartate O-methyltransferase</fullName>
        <ecNumber evidence="1">2.1.1.77</ecNumber>
    </recommendedName>
    <alternativeName>
        <fullName evidence="1">L-isoaspartyl protein carboxyl methyltransferase</fullName>
    </alternativeName>
    <alternativeName>
        <fullName evidence="1">Protein L-isoaspartyl methyltransferase</fullName>
    </alternativeName>
    <alternativeName>
        <fullName evidence="1">Protein-beta-aspartate methyltransferase</fullName>
        <shortName evidence="1">PIMT</shortName>
    </alternativeName>
</protein>
<comment type="function">
    <text evidence="1">Catalyzes the methyl esterification of L-isoaspartyl residues in peptides and proteins that result from spontaneous decomposition of normal L-aspartyl and L-asparaginyl residues. It plays a role in the repair and/or degradation of damaged proteins.</text>
</comment>
<comment type="catalytic activity">
    <reaction evidence="1">
        <text>[protein]-L-isoaspartate + S-adenosyl-L-methionine = [protein]-L-isoaspartate alpha-methyl ester + S-adenosyl-L-homocysteine</text>
        <dbReference type="Rhea" id="RHEA:12705"/>
        <dbReference type="Rhea" id="RHEA-COMP:12143"/>
        <dbReference type="Rhea" id="RHEA-COMP:12144"/>
        <dbReference type="ChEBI" id="CHEBI:57856"/>
        <dbReference type="ChEBI" id="CHEBI:59789"/>
        <dbReference type="ChEBI" id="CHEBI:90596"/>
        <dbReference type="ChEBI" id="CHEBI:90598"/>
        <dbReference type="EC" id="2.1.1.77"/>
    </reaction>
</comment>
<comment type="subcellular location">
    <subcellularLocation>
        <location evidence="1">Cytoplasm</location>
    </subcellularLocation>
</comment>
<comment type="similarity">
    <text evidence="1">Belongs to the methyltransferase superfamily. L-isoaspartyl/D-aspartyl protein methyltransferase family.</text>
</comment>
<comment type="sequence caution" evidence="2">
    <conflict type="erroneous initiation">
        <sequence resource="EMBL-CDS" id="AAZ34857"/>
    </conflict>
</comment>
<gene>
    <name evidence="1" type="primary">pcm</name>
    <name type="ordered locus">PSPPH_3811</name>
</gene>
<proteinExistence type="inferred from homology"/>
<evidence type="ECO:0000255" key="1">
    <source>
        <dbReference type="HAMAP-Rule" id="MF_00090"/>
    </source>
</evidence>
<evidence type="ECO:0000305" key="2"/>